<reference key="1">
    <citation type="journal article" date="2006" name="Genome Res.">
        <title>Skewed genomic variability in strains of the toxigenic bacterial pathogen, Clostridium perfringens.</title>
        <authorList>
            <person name="Myers G.S.A."/>
            <person name="Rasko D.A."/>
            <person name="Cheung J.K."/>
            <person name="Ravel J."/>
            <person name="Seshadri R."/>
            <person name="DeBoy R.T."/>
            <person name="Ren Q."/>
            <person name="Varga J."/>
            <person name="Awad M.M."/>
            <person name="Brinkac L.M."/>
            <person name="Daugherty S.C."/>
            <person name="Haft D.H."/>
            <person name="Dodson R.J."/>
            <person name="Madupu R."/>
            <person name="Nelson W.C."/>
            <person name="Rosovitz M.J."/>
            <person name="Sullivan S.A."/>
            <person name="Khouri H."/>
            <person name="Dimitrov G.I."/>
            <person name="Watkins K.L."/>
            <person name="Mulligan S."/>
            <person name="Benton J."/>
            <person name="Radune D."/>
            <person name="Fisher D.J."/>
            <person name="Atkins H.S."/>
            <person name="Hiscox T."/>
            <person name="Jost B.H."/>
            <person name="Billington S.J."/>
            <person name="Songer J.G."/>
            <person name="McClane B.A."/>
            <person name="Titball R.W."/>
            <person name="Rood J.I."/>
            <person name="Melville S.B."/>
            <person name="Paulsen I.T."/>
        </authorList>
    </citation>
    <scope>NUCLEOTIDE SEQUENCE [LARGE SCALE GENOMIC DNA]</scope>
    <source>
        <strain>ATCC 13124 / DSM 756 / JCM 1290 / NCIMB 6125 / NCTC 8237 / S 107 / Type A</strain>
    </source>
</reference>
<evidence type="ECO:0000255" key="1">
    <source>
        <dbReference type="HAMAP-Rule" id="MF_00685"/>
    </source>
</evidence>
<evidence type="ECO:0000256" key="2">
    <source>
        <dbReference type="SAM" id="MobiDB-lite"/>
    </source>
</evidence>
<dbReference type="EC" id="2.4.1.18" evidence="1"/>
<dbReference type="EMBL" id="CP000246">
    <property type="protein sequence ID" value="ABG84928.1"/>
    <property type="molecule type" value="Genomic_DNA"/>
</dbReference>
<dbReference type="SMR" id="Q0TQ16"/>
<dbReference type="STRING" id="195103.CPF_1840"/>
<dbReference type="CAZy" id="CBM48">
    <property type="family name" value="Carbohydrate-Binding Module Family 48"/>
</dbReference>
<dbReference type="CAZy" id="GH13">
    <property type="family name" value="Glycoside Hydrolase Family 13"/>
</dbReference>
<dbReference type="PaxDb" id="195103-CPF_1840"/>
<dbReference type="KEGG" id="cpf:CPF_1840"/>
<dbReference type="eggNOG" id="COG0296">
    <property type="taxonomic scope" value="Bacteria"/>
</dbReference>
<dbReference type="HOGENOM" id="CLU_004245_4_0_9"/>
<dbReference type="UniPathway" id="UPA00164"/>
<dbReference type="Proteomes" id="UP000001823">
    <property type="component" value="Chromosome"/>
</dbReference>
<dbReference type="GO" id="GO:0005829">
    <property type="term" value="C:cytosol"/>
    <property type="evidence" value="ECO:0007669"/>
    <property type="project" value="TreeGrafter"/>
</dbReference>
<dbReference type="GO" id="GO:0003844">
    <property type="term" value="F:1,4-alpha-glucan branching enzyme activity"/>
    <property type="evidence" value="ECO:0007669"/>
    <property type="project" value="UniProtKB-UniRule"/>
</dbReference>
<dbReference type="GO" id="GO:0043169">
    <property type="term" value="F:cation binding"/>
    <property type="evidence" value="ECO:0007669"/>
    <property type="project" value="InterPro"/>
</dbReference>
<dbReference type="GO" id="GO:0004553">
    <property type="term" value="F:hydrolase activity, hydrolyzing O-glycosyl compounds"/>
    <property type="evidence" value="ECO:0007669"/>
    <property type="project" value="InterPro"/>
</dbReference>
<dbReference type="GO" id="GO:0005978">
    <property type="term" value="P:glycogen biosynthetic process"/>
    <property type="evidence" value="ECO:0007669"/>
    <property type="project" value="UniProtKB-UniRule"/>
</dbReference>
<dbReference type="CDD" id="cd11322">
    <property type="entry name" value="AmyAc_Glg_BE"/>
    <property type="match status" value="1"/>
</dbReference>
<dbReference type="CDD" id="cd02855">
    <property type="entry name" value="E_set_GBE_prok_N"/>
    <property type="match status" value="1"/>
</dbReference>
<dbReference type="FunFam" id="2.60.40.1180:FF:000002">
    <property type="entry name" value="1,4-alpha-glucan branching enzyme GlgB"/>
    <property type="match status" value="1"/>
</dbReference>
<dbReference type="FunFam" id="3.20.20.80:FF:000003">
    <property type="entry name" value="1,4-alpha-glucan branching enzyme GlgB"/>
    <property type="match status" value="1"/>
</dbReference>
<dbReference type="Gene3D" id="3.20.20.80">
    <property type="entry name" value="Glycosidases"/>
    <property type="match status" value="1"/>
</dbReference>
<dbReference type="Gene3D" id="2.60.40.1180">
    <property type="entry name" value="Golgi alpha-mannosidase II"/>
    <property type="match status" value="1"/>
</dbReference>
<dbReference type="Gene3D" id="2.60.40.10">
    <property type="entry name" value="Immunoglobulins"/>
    <property type="match status" value="1"/>
</dbReference>
<dbReference type="HAMAP" id="MF_00685">
    <property type="entry name" value="GlgB"/>
    <property type="match status" value="1"/>
</dbReference>
<dbReference type="InterPro" id="IPR006048">
    <property type="entry name" value="A-amylase/branching_C"/>
</dbReference>
<dbReference type="InterPro" id="IPR037439">
    <property type="entry name" value="Branching_enzy"/>
</dbReference>
<dbReference type="InterPro" id="IPR006407">
    <property type="entry name" value="GlgB"/>
</dbReference>
<dbReference type="InterPro" id="IPR044143">
    <property type="entry name" value="GlgB_N_E_set_prok"/>
</dbReference>
<dbReference type="InterPro" id="IPR006047">
    <property type="entry name" value="Glyco_hydro_13_cat_dom"/>
</dbReference>
<dbReference type="InterPro" id="IPR004193">
    <property type="entry name" value="Glyco_hydro_13_N"/>
</dbReference>
<dbReference type="InterPro" id="IPR013780">
    <property type="entry name" value="Glyco_hydro_b"/>
</dbReference>
<dbReference type="InterPro" id="IPR017853">
    <property type="entry name" value="Glycoside_hydrolase_SF"/>
</dbReference>
<dbReference type="InterPro" id="IPR013783">
    <property type="entry name" value="Ig-like_fold"/>
</dbReference>
<dbReference type="InterPro" id="IPR014756">
    <property type="entry name" value="Ig_E-set"/>
</dbReference>
<dbReference type="NCBIfam" id="TIGR01515">
    <property type="entry name" value="branching_enzym"/>
    <property type="match status" value="1"/>
</dbReference>
<dbReference type="NCBIfam" id="NF003811">
    <property type="entry name" value="PRK05402.1"/>
    <property type="match status" value="1"/>
</dbReference>
<dbReference type="NCBIfam" id="NF008967">
    <property type="entry name" value="PRK12313.1"/>
    <property type="match status" value="1"/>
</dbReference>
<dbReference type="PANTHER" id="PTHR43651">
    <property type="entry name" value="1,4-ALPHA-GLUCAN-BRANCHING ENZYME"/>
    <property type="match status" value="1"/>
</dbReference>
<dbReference type="PANTHER" id="PTHR43651:SF3">
    <property type="entry name" value="1,4-ALPHA-GLUCAN-BRANCHING ENZYME"/>
    <property type="match status" value="1"/>
</dbReference>
<dbReference type="Pfam" id="PF00128">
    <property type="entry name" value="Alpha-amylase"/>
    <property type="match status" value="2"/>
</dbReference>
<dbReference type="Pfam" id="PF02806">
    <property type="entry name" value="Alpha-amylase_C"/>
    <property type="match status" value="1"/>
</dbReference>
<dbReference type="Pfam" id="PF02922">
    <property type="entry name" value="CBM_48"/>
    <property type="match status" value="1"/>
</dbReference>
<dbReference type="PIRSF" id="PIRSF000463">
    <property type="entry name" value="GlgB"/>
    <property type="match status" value="1"/>
</dbReference>
<dbReference type="SMART" id="SM00642">
    <property type="entry name" value="Aamy"/>
    <property type="match status" value="1"/>
</dbReference>
<dbReference type="SUPFAM" id="SSF51445">
    <property type="entry name" value="(Trans)glycosidases"/>
    <property type="match status" value="1"/>
</dbReference>
<dbReference type="SUPFAM" id="SSF81296">
    <property type="entry name" value="E set domains"/>
    <property type="match status" value="1"/>
</dbReference>
<dbReference type="SUPFAM" id="SSF51011">
    <property type="entry name" value="Glycosyl hydrolase domain"/>
    <property type="match status" value="1"/>
</dbReference>
<protein>
    <recommendedName>
        <fullName evidence="1">1,4-alpha-glucan branching enzyme GlgB</fullName>
        <ecNumber evidence="1">2.4.1.18</ecNumber>
    </recommendedName>
    <alternativeName>
        <fullName evidence="1">1,4-alpha-D-glucan:1,4-alpha-D-glucan 6-glucosyl-transferase</fullName>
    </alternativeName>
    <alternativeName>
        <fullName evidence="1">Alpha-(1-&gt;4)-glucan branching enzyme</fullName>
    </alternativeName>
    <alternativeName>
        <fullName evidence="1">Glycogen branching enzyme</fullName>
        <shortName evidence="1">BE</shortName>
    </alternativeName>
</protein>
<proteinExistence type="inferred from homology"/>
<sequence length="659" mass="77008">MRNCKELKHEKNGNVTEKIGKNKGKSKKVSKDESLLSFDLFLEGKEHSAYKFMGAHFVTENRKRGVRFTTWAPRSSKIYVIGDFNNWELKEEYSMKKINERGIWSLFLPKLEEGIKYKFAVVNECGNNTVYKADPYAFKSELRPNTASVLTKIKSFRWGDKRWLNKREKEGLDNKPMNIYELHLGSWKRKDGEFMTYEEISEVLVEYVKEMGYTHVEFMPINEHPLDASWGYQGVGYYSVTSRYGDLNGLKALINKLHKNNIGVLLDWVPSHFCKDEHGLFMFDGSPTYEYGAWWKANNEGWGTCNFDLGRPEVKSFLFSNAMYWINEFHIDGLRVDAVSNMLYLDYGREYGEWEPNIYGGNGNLEAIAFLKELNTIIKKEGKGAITVAEESTSWEGITKPVEEDGLGFDYKWNMGWMNDTLSYIELDPIYRKYHHNKMNFSMMYNYSEKFILPISHDEVVHGKKSLINKMWGDDWKKYAGLRLYASFMMGHPGKKLMFMGCEFGQFVEWREWEELQWNIIEEFDIHKKTQEYFKALNHFYLENSSLWSLDYEEEGFKWIDADNSEESVLSFIRIGKNKKEKLIFICNFTPEVYYDFKVGVPELGEYVEVFNSDSLEFGGAGNIMGDSILKATEESFKDFDYSIIVKVPPLGTLVLKVK</sequence>
<name>GLGB_CLOP1</name>
<accession>Q0TQ16</accession>
<keyword id="KW-0119">Carbohydrate metabolism</keyword>
<keyword id="KW-0320">Glycogen biosynthesis</keyword>
<keyword id="KW-0321">Glycogen metabolism</keyword>
<keyword id="KW-0328">Glycosyltransferase</keyword>
<keyword id="KW-0808">Transferase</keyword>
<comment type="function">
    <text evidence="1">Catalyzes the formation of the alpha-1,6-glucosidic linkages in glycogen by scission of a 1,4-alpha-linked oligosaccharide from growing alpha-1,4-glucan chains and the subsequent attachment of the oligosaccharide to the alpha-1,6 position.</text>
</comment>
<comment type="catalytic activity">
    <reaction evidence="1">
        <text>Transfers a segment of a (1-&gt;4)-alpha-D-glucan chain to a primary hydroxy group in a similar glucan chain.</text>
        <dbReference type="EC" id="2.4.1.18"/>
    </reaction>
</comment>
<comment type="pathway">
    <text evidence="1">Glycan biosynthesis; glycogen biosynthesis.</text>
</comment>
<comment type="subunit">
    <text evidence="1">Monomer.</text>
</comment>
<comment type="similarity">
    <text evidence="1">Belongs to the glycosyl hydrolase 13 family. GlgB subfamily.</text>
</comment>
<gene>
    <name evidence="1" type="primary">glgB</name>
    <name type="ordered locus">CPF_1840</name>
</gene>
<organism>
    <name type="scientific">Clostridium perfringens (strain ATCC 13124 / DSM 756 / JCM 1290 / NCIMB 6125 / NCTC 8237 / Type A)</name>
    <dbReference type="NCBI Taxonomy" id="195103"/>
    <lineage>
        <taxon>Bacteria</taxon>
        <taxon>Bacillati</taxon>
        <taxon>Bacillota</taxon>
        <taxon>Clostridia</taxon>
        <taxon>Eubacteriales</taxon>
        <taxon>Clostridiaceae</taxon>
        <taxon>Clostridium</taxon>
    </lineage>
</organism>
<feature type="chain" id="PRO_0000260645" description="1,4-alpha-glucan branching enzyme GlgB">
    <location>
        <begin position="1"/>
        <end position="659"/>
    </location>
</feature>
<feature type="region of interest" description="Disordered" evidence="2">
    <location>
        <begin position="1"/>
        <end position="25"/>
    </location>
</feature>
<feature type="compositionally biased region" description="Basic and acidic residues" evidence="2">
    <location>
        <begin position="1"/>
        <end position="12"/>
    </location>
</feature>
<feature type="active site" description="Nucleophile" evidence="1">
    <location>
        <position position="337"/>
    </location>
</feature>
<feature type="active site" description="Proton donor" evidence="1">
    <location>
        <position position="390"/>
    </location>
</feature>